<accession>A4FX39</accession>
<evidence type="ECO:0000255" key="1">
    <source>
        <dbReference type="HAMAP-Rule" id="MF_00424"/>
    </source>
</evidence>
<comment type="function">
    <text evidence="1">Directs the termination of nascent peptide synthesis (translation) in response to the termination codons UAA, UAG and UGA.</text>
</comment>
<comment type="subunit">
    <text evidence="1">Heterodimer of two subunits, one of which binds GTP.</text>
</comment>
<comment type="subcellular location">
    <subcellularLocation>
        <location evidence="1">Cytoplasm</location>
    </subcellularLocation>
</comment>
<comment type="similarity">
    <text evidence="1">Belongs to the eukaryotic release factor 1 family.</text>
</comment>
<name>RF1_METM5</name>
<organism>
    <name type="scientific">Methanococcus maripaludis (strain C5 / ATCC BAA-1333)</name>
    <dbReference type="NCBI Taxonomy" id="402880"/>
    <lineage>
        <taxon>Archaea</taxon>
        <taxon>Methanobacteriati</taxon>
        <taxon>Methanobacteriota</taxon>
        <taxon>Methanomada group</taxon>
        <taxon>Methanococci</taxon>
        <taxon>Methanococcales</taxon>
        <taxon>Methanococcaceae</taxon>
        <taxon>Methanococcus</taxon>
    </lineage>
</organism>
<keyword id="KW-0963">Cytoplasm</keyword>
<keyword id="KW-0648">Protein biosynthesis</keyword>
<protein>
    <recommendedName>
        <fullName evidence="1">Peptide chain release factor subunit 1</fullName>
    </recommendedName>
    <alternativeName>
        <fullName evidence="1">Translation termination factor aRF1</fullName>
    </alternativeName>
</protein>
<dbReference type="EMBL" id="CP000609">
    <property type="protein sequence ID" value="ABO34768.1"/>
    <property type="molecule type" value="Genomic_DNA"/>
</dbReference>
<dbReference type="RefSeq" id="WP_011868223.1">
    <property type="nucleotide sequence ID" value="NC_009135.1"/>
</dbReference>
<dbReference type="SMR" id="A4FX39"/>
<dbReference type="STRING" id="402880.MmarC5_0453"/>
<dbReference type="DNASU" id="4928774"/>
<dbReference type="GeneID" id="4928774"/>
<dbReference type="KEGG" id="mmq:MmarC5_0453"/>
<dbReference type="eggNOG" id="arCOG01742">
    <property type="taxonomic scope" value="Archaea"/>
</dbReference>
<dbReference type="HOGENOM" id="CLU_035759_3_0_2"/>
<dbReference type="OrthoDB" id="1011at2157"/>
<dbReference type="Proteomes" id="UP000000253">
    <property type="component" value="Chromosome"/>
</dbReference>
<dbReference type="GO" id="GO:0005737">
    <property type="term" value="C:cytoplasm"/>
    <property type="evidence" value="ECO:0007669"/>
    <property type="project" value="UniProtKB-SubCell"/>
</dbReference>
<dbReference type="GO" id="GO:0016149">
    <property type="term" value="F:translation release factor activity, codon specific"/>
    <property type="evidence" value="ECO:0007669"/>
    <property type="project" value="UniProtKB-UniRule"/>
</dbReference>
<dbReference type="FunFam" id="3.30.1330.30:FF:000032">
    <property type="entry name" value="Eukaryotic peptide chain release factor subunit 1"/>
    <property type="match status" value="1"/>
</dbReference>
<dbReference type="FunFam" id="3.30.420.60:FF:000003">
    <property type="entry name" value="Peptide chain release factor subunit 1"/>
    <property type="match status" value="1"/>
</dbReference>
<dbReference type="FunFam" id="3.30.960.10:FF:000003">
    <property type="entry name" value="Peptide chain release factor subunit 1"/>
    <property type="match status" value="1"/>
</dbReference>
<dbReference type="Gene3D" id="1.20.5.170">
    <property type="match status" value="1"/>
</dbReference>
<dbReference type="Gene3D" id="3.30.1330.30">
    <property type="match status" value="1"/>
</dbReference>
<dbReference type="Gene3D" id="3.30.960.10">
    <property type="entry name" value="eRF1 domain 1"/>
    <property type="match status" value="1"/>
</dbReference>
<dbReference type="Gene3D" id="3.30.420.60">
    <property type="entry name" value="eRF1 domain 2"/>
    <property type="match status" value="1"/>
</dbReference>
<dbReference type="HAMAP" id="MF_00424">
    <property type="entry name" value="Rel_fact_arch_1"/>
    <property type="match status" value="1"/>
</dbReference>
<dbReference type="InterPro" id="IPR042226">
    <property type="entry name" value="eFR1_2_sf"/>
</dbReference>
<dbReference type="InterPro" id="IPR005140">
    <property type="entry name" value="eRF1_1_Pelota"/>
</dbReference>
<dbReference type="InterPro" id="IPR024049">
    <property type="entry name" value="eRF1_1_sf"/>
</dbReference>
<dbReference type="InterPro" id="IPR005141">
    <property type="entry name" value="eRF1_2"/>
</dbReference>
<dbReference type="InterPro" id="IPR005142">
    <property type="entry name" value="eRF1_3"/>
</dbReference>
<dbReference type="InterPro" id="IPR020918">
    <property type="entry name" value="Peptide_chain-rel_aRF1"/>
</dbReference>
<dbReference type="InterPro" id="IPR004403">
    <property type="entry name" value="Peptide_chain-rel_eRF1/aRF1"/>
</dbReference>
<dbReference type="InterPro" id="IPR029064">
    <property type="entry name" value="Ribosomal_eL30-like_sf"/>
</dbReference>
<dbReference type="NCBIfam" id="TIGR03676">
    <property type="entry name" value="aRF1_eRF1"/>
    <property type="match status" value="1"/>
</dbReference>
<dbReference type="PANTHER" id="PTHR10113">
    <property type="entry name" value="PEPTIDE CHAIN RELEASE FACTOR SUBUNIT 1"/>
    <property type="match status" value="1"/>
</dbReference>
<dbReference type="Pfam" id="PF03463">
    <property type="entry name" value="eRF1_1"/>
    <property type="match status" value="1"/>
</dbReference>
<dbReference type="Pfam" id="PF03464">
    <property type="entry name" value="eRF1_2"/>
    <property type="match status" value="1"/>
</dbReference>
<dbReference type="Pfam" id="PF03465">
    <property type="entry name" value="eRF1_3"/>
    <property type="match status" value="1"/>
</dbReference>
<dbReference type="SMART" id="SM01194">
    <property type="entry name" value="eRF1_1"/>
    <property type="match status" value="1"/>
</dbReference>
<dbReference type="SUPFAM" id="SSF55315">
    <property type="entry name" value="L30e-like"/>
    <property type="match status" value="1"/>
</dbReference>
<dbReference type="SUPFAM" id="SSF55481">
    <property type="entry name" value="N-terminal domain of eukaryotic peptide chain release factor subunit 1, ERF1"/>
    <property type="match status" value="1"/>
</dbReference>
<dbReference type="SUPFAM" id="SSF53137">
    <property type="entry name" value="Translational machinery components"/>
    <property type="match status" value="1"/>
</dbReference>
<reference key="1">
    <citation type="submission" date="2007-03" db="EMBL/GenBank/DDBJ databases">
        <title>Complete sequence of chromosome of Methanococcus maripaludis C5.</title>
        <authorList>
            <consortium name="US DOE Joint Genome Institute"/>
            <person name="Copeland A."/>
            <person name="Lucas S."/>
            <person name="Lapidus A."/>
            <person name="Barry K."/>
            <person name="Glavina del Rio T."/>
            <person name="Dalin E."/>
            <person name="Tice H."/>
            <person name="Pitluck S."/>
            <person name="Chertkov O."/>
            <person name="Brettin T."/>
            <person name="Bruce D."/>
            <person name="Han C."/>
            <person name="Detter J.C."/>
            <person name="Schmutz J."/>
            <person name="Larimer F."/>
            <person name="Land M."/>
            <person name="Hauser L."/>
            <person name="Kyrpides N."/>
            <person name="Mikhailova N."/>
            <person name="Sieprawska-Lupa M."/>
            <person name="Whitman W.B."/>
            <person name="Richardson P."/>
        </authorList>
    </citation>
    <scope>NUCLEOTIDE SEQUENCE [LARGE SCALE GENOMIC DNA]</scope>
    <source>
        <strain>C5 / ATCC BAA-1333</strain>
    </source>
</reference>
<sequence>MSGNSSTDMYLFKKSLKELKGKKGKGTELISVYVPAGRRLSDISQYLRQELSQSSNIKSKTTMKNVQSAIEVILQRLKLLKEPLEMGVIIFAGMIPRGGPGTEKMEVYVLEPPEPVKTFVYRCDSLFYTDPLEDFIQDTEVYGVILVDRNEATIGTVKGKTITVLKKLTSGVPGKFKAGGQSARRLERLIDDAAHQFMVRIGEYATESFMPILEEKKLKGLLLGGPGNTKNEFAEKDYLHHELKKKIIDTFDLCYTEEFGIRELLDKASDLLRDLDLMKEKNLIQKFFKELIKDDGGLSAYGEAQVMKYLEMGAIDTLIVTEDIGITRVTVKCNNCDYAQEVNVKTNEMFKFEEQLKTKACPTCGGAMYIDEEKDIIEHLSDLCHMHNTDIIVVSTDTEEGSQISRAFKGMAAILRYKL</sequence>
<gene>
    <name evidence="1" type="primary">prf1</name>
    <name type="ordered locus">MmarC5_0453</name>
</gene>
<feature type="chain" id="PRO_1000060104" description="Peptide chain release factor subunit 1">
    <location>
        <begin position="1"/>
        <end position="419"/>
    </location>
</feature>
<proteinExistence type="inferred from homology"/>